<comment type="function">
    <text evidence="1">Involved in both the arginine and lysine biosynthetic pathways.</text>
</comment>
<comment type="catalytic activity">
    <reaction evidence="1">
        <text>[amino-group carrier protein]-C-terminal-gamma-(L-lysyl)-L-glutamate + 2-oxoglutarate = [amino-group carrier protein]-C-terminal-N-(1-carboxy-5-oxopentan-1-yl)-L-glutamine + L-glutamate</text>
        <dbReference type="Rhea" id="RHEA:41952"/>
        <dbReference type="Rhea" id="RHEA-COMP:9714"/>
        <dbReference type="Rhea" id="RHEA-COMP:9715"/>
        <dbReference type="ChEBI" id="CHEBI:16810"/>
        <dbReference type="ChEBI" id="CHEBI:29985"/>
        <dbReference type="ChEBI" id="CHEBI:78501"/>
        <dbReference type="ChEBI" id="CHEBI:78526"/>
        <dbReference type="EC" id="2.6.1.118"/>
    </reaction>
</comment>
<comment type="catalytic activity">
    <reaction evidence="1">
        <text>[amino-group carrier protein]-C-terminal-gamma-(L-ornithyl)-L-glutamate + 2-oxoglutarate = [amino-group carrier protein]-C-terminal-gamma-(L-glutamyl-5-semialdehyde)-L-glutamate + L-glutamate</text>
        <dbReference type="Rhea" id="RHEA:52672"/>
        <dbReference type="Rhea" id="RHEA-COMP:13327"/>
        <dbReference type="Rhea" id="RHEA-COMP:13328"/>
        <dbReference type="ChEBI" id="CHEBI:16810"/>
        <dbReference type="ChEBI" id="CHEBI:29985"/>
        <dbReference type="ChEBI" id="CHEBI:136761"/>
        <dbReference type="ChEBI" id="CHEBI:136763"/>
        <dbReference type="EC" id="2.6.1.124"/>
    </reaction>
</comment>
<comment type="cofactor">
    <cofactor evidence="1">
        <name>pyridoxal 5'-phosphate</name>
        <dbReference type="ChEBI" id="CHEBI:597326"/>
    </cofactor>
    <text evidence="1">Binds 1 pyridoxal phosphate per subunit.</text>
</comment>
<comment type="pathway">
    <text evidence="1">Amino-acid biosynthesis; L-lysine biosynthesis via AAA pathway; L-lysine from L-alpha-aminoadipate (Thermus route): step 4/5.</text>
</comment>
<comment type="pathway">
    <text evidence="1">Amino-acid biosynthesis; L-arginine biosynthesis.</text>
</comment>
<comment type="subunit">
    <text evidence="1">Homodimer.</text>
</comment>
<comment type="subcellular location">
    <subcellularLocation>
        <location evidence="1">Cytoplasm</location>
    </subcellularLocation>
</comment>
<comment type="similarity">
    <text evidence="1">Belongs to the class-III pyridoxal-phosphate-dependent aminotransferase family. LysJ subfamily.</text>
</comment>
<protein>
    <recommendedName>
        <fullName evidence="1">Putative [LysW]-aminoadipate semialdehyde/glutamate semialdehyde transaminase</fullName>
        <ecNumber evidence="1">2.6.1.118</ecNumber>
        <ecNumber evidence="1">2.6.1.124</ecNumber>
    </recommendedName>
</protein>
<evidence type="ECO:0000255" key="1">
    <source>
        <dbReference type="HAMAP-Rule" id="MF_02084"/>
    </source>
</evidence>
<keyword id="KW-0028">Amino-acid biosynthesis</keyword>
<keyword id="KW-0032">Aminotransferase</keyword>
<keyword id="KW-0055">Arginine biosynthesis</keyword>
<keyword id="KW-0963">Cytoplasm</keyword>
<keyword id="KW-0457">Lysine biosynthesis</keyword>
<keyword id="KW-0663">Pyridoxal phosphate</keyword>
<keyword id="KW-0808">Transferase</keyword>
<feature type="chain" id="PRO_0000112825" description="Putative [LysW]-aminoadipate semialdehyde/glutamate semialdehyde transaminase">
    <location>
        <begin position="1"/>
        <end position="364"/>
    </location>
</feature>
<feature type="binding site" evidence="1">
    <location>
        <begin position="90"/>
        <end position="91"/>
    </location>
    <ligand>
        <name>pyridoxal 5'-phosphate</name>
        <dbReference type="ChEBI" id="CHEBI:597326"/>
    </ligand>
</feature>
<feature type="binding site" evidence="1">
    <location>
        <position position="117"/>
    </location>
    <ligand>
        <name>pyridoxal 5'-phosphate</name>
        <dbReference type="ChEBI" id="CHEBI:597326"/>
    </ligand>
</feature>
<feature type="binding site" evidence="1">
    <location>
        <position position="120"/>
    </location>
    <ligand>
        <name>substrate</name>
    </ligand>
</feature>
<feature type="binding site" evidence="1">
    <location>
        <begin position="202"/>
        <end position="205"/>
    </location>
    <ligand>
        <name>pyridoxal 5'-phosphate</name>
        <dbReference type="ChEBI" id="CHEBI:597326"/>
    </ligand>
</feature>
<feature type="binding site" evidence="1">
    <location>
        <position position="254"/>
    </location>
    <ligand>
        <name>substrate</name>
    </ligand>
</feature>
<feature type="binding site" evidence="1">
    <location>
        <position position="255"/>
    </location>
    <ligand>
        <name>pyridoxal 5'-phosphate</name>
        <dbReference type="ChEBI" id="CHEBI:597326"/>
    </ligand>
</feature>
<feature type="modified residue" description="N6-(pyridoxal phosphate)lysine" evidence="1">
    <location>
        <position position="230"/>
    </location>
</feature>
<name>LYSJ_PYRAB</name>
<organism>
    <name type="scientific">Pyrococcus abyssi (strain GE5 / Orsay)</name>
    <dbReference type="NCBI Taxonomy" id="272844"/>
    <lineage>
        <taxon>Archaea</taxon>
        <taxon>Methanobacteriati</taxon>
        <taxon>Methanobacteriota</taxon>
        <taxon>Thermococci</taxon>
        <taxon>Thermococcales</taxon>
        <taxon>Thermococcaceae</taxon>
        <taxon>Pyrococcus</taxon>
    </lineage>
</organism>
<accession>Q9V1I4</accession>
<accession>G8ZGE6</accession>
<reference key="1">
    <citation type="journal article" date="2003" name="Mol. Microbiol.">
        <title>An integrated analysis of the genome of the hyperthermophilic archaeon Pyrococcus abyssi.</title>
        <authorList>
            <person name="Cohen G.N."/>
            <person name="Barbe V."/>
            <person name="Flament D."/>
            <person name="Galperin M."/>
            <person name="Heilig R."/>
            <person name="Lecompte O."/>
            <person name="Poch O."/>
            <person name="Prieur D."/>
            <person name="Querellou J."/>
            <person name="Ripp R."/>
            <person name="Thierry J.-C."/>
            <person name="Van der Oost J."/>
            <person name="Weissenbach J."/>
            <person name="Zivanovic Y."/>
            <person name="Forterre P."/>
        </authorList>
    </citation>
    <scope>NUCLEOTIDE SEQUENCE [LARGE SCALE GENOMIC DNA]</scope>
    <source>
        <strain>GE5 / Orsay</strain>
    </source>
</reference>
<reference key="2">
    <citation type="journal article" date="2012" name="Curr. Microbiol.">
        <title>Re-annotation of two hyperthermophilic archaea Pyrococcus abyssi GE5 and Pyrococcus furiosus DSM 3638.</title>
        <authorList>
            <person name="Gao J."/>
            <person name="Wang J."/>
        </authorList>
    </citation>
    <scope>GENOME REANNOTATION</scope>
    <source>
        <strain>GE5 / Orsay</strain>
    </source>
</reference>
<gene>
    <name evidence="1" type="primary">lysJ</name>
    <name type="ordered locus">PYRAB04430</name>
    <name type="ORF">PAB2440</name>
</gene>
<proteinExistence type="inferred from homology"/>
<sequence>MSLYRKRLKIVRGEGIYVWDSEGKRYLDLIAGIGVAILGHNHPKWVEEVGNQLNKLVVAGPMFEHEEKEEMLEELSRWVNFEYVYMGNSGTEAVEAALKFARLYTGRKEIIAMTNAFHGRTMGALSATWKSKYKKDFEPLVPGFKHIPFNDVEAAKEAITRTTAAVIFEPIQGESGIIPAKEEFVKTLRDLTEDVGALLIADEVQSGLRTGKFLAVEHYKVEPDIVTLGKGIGNGVPVSLTLTNFDVERGKHGSTFGGNPLACKAVAVTLRILRKERLVEKASEKFIKVKGKDVVTTRGRGLMIGIVLKKPVGRYVEELQNEGYLVHTSGQRVIRLLPPLIISKEKMMEVKSAIEGVINGDTEG</sequence>
<dbReference type="EC" id="2.6.1.118" evidence="1"/>
<dbReference type="EC" id="2.6.1.124" evidence="1"/>
<dbReference type="EMBL" id="AJ248284">
    <property type="protein sequence ID" value="CAB49365.1"/>
    <property type="molecule type" value="Genomic_DNA"/>
</dbReference>
<dbReference type="EMBL" id="HE613800">
    <property type="protein sequence ID" value="CCE69825.1"/>
    <property type="molecule type" value="Genomic_DNA"/>
</dbReference>
<dbReference type="PIR" id="F75160">
    <property type="entry name" value="F75160"/>
</dbReference>
<dbReference type="RefSeq" id="WP_010867566.1">
    <property type="nucleotide sequence ID" value="NC_000868.1"/>
</dbReference>
<dbReference type="SMR" id="Q9V1I4"/>
<dbReference type="STRING" id="272844.PAB2440"/>
<dbReference type="KEGG" id="pab:PAB2440"/>
<dbReference type="PATRIC" id="fig|272844.11.peg.469"/>
<dbReference type="eggNOG" id="arCOG00914">
    <property type="taxonomic scope" value="Archaea"/>
</dbReference>
<dbReference type="HOGENOM" id="CLU_016922_10_0_2"/>
<dbReference type="OrthoDB" id="85346at2157"/>
<dbReference type="PhylomeDB" id="Q9V1I4"/>
<dbReference type="UniPathway" id="UPA00033">
    <property type="reaction ID" value="UER00038"/>
</dbReference>
<dbReference type="UniPathway" id="UPA00068"/>
<dbReference type="Proteomes" id="UP000000810">
    <property type="component" value="Chromosome"/>
</dbReference>
<dbReference type="Proteomes" id="UP000009139">
    <property type="component" value="Chromosome"/>
</dbReference>
<dbReference type="GO" id="GO:0005737">
    <property type="term" value="C:cytoplasm"/>
    <property type="evidence" value="ECO:0007669"/>
    <property type="project" value="UniProtKB-SubCell"/>
</dbReference>
<dbReference type="GO" id="GO:0042802">
    <property type="term" value="F:identical protein binding"/>
    <property type="evidence" value="ECO:0007669"/>
    <property type="project" value="TreeGrafter"/>
</dbReference>
<dbReference type="GO" id="GO:0030170">
    <property type="term" value="F:pyridoxal phosphate binding"/>
    <property type="evidence" value="ECO:0007669"/>
    <property type="project" value="InterPro"/>
</dbReference>
<dbReference type="GO" id="GO:0008483">
    <property type="term" value="F:transaminase activity"/>
    <property type="evidence" value="ECO:0007669"/>
    <property type="project" value="UniProtKB-UniRule"/>
</dbReference>
<dbReference type="GO" id="GO:0042450">
    <property type="term" value="P:arginine biosynthetic process via ornithine"/>
    <property type="evidence" value="ECO:0007669"/>
    <property type="project" value="UniProtKB-UniRule"/>
</dbReference>
<dbReference type="GO" id="GO:0006526">
    <property type="term" value="P:L-arginine biosynthetic process"/>
    <property type="evidence" value="ECO:0007669"/>
    <property type="project" value="UniProtKB-UniPathway"/>
</dbReference>
<dbReference type="GO" id="GO:0019878">
    <property type="term" value="P:lysine biosynthetic process via aminoadipic acid"/>
    <property type="evidence" value="ECO:0007669"/>
    <property type="project" value="UniProtKB-UniRule"/>
</dbReference>
<dbReference type="CDD" id="cd00610">
    <property type="entry name" value="OAT_like"/>
    <property type="match status" value="1"/>
</dbReference>
<dbReference type="FunFam" id="3.40.640.10:FF:000004">
    <property type="entry name" value="Acetylornithine aminotransferase"/>
    <property type="match status" value="1"/>
</dbReference>
<dbReference type="Gene3D" id="3.90.1150.10">
    <property type="entry name" value="Aspartate Aminotransferase, domain 1"/>
    <property type="match status" value="1"/>
</dbReference>
<dbReference type="Gene3D" id="3.40.640.10">
    <property type="entry name" value="Type I PLP-dependent aspartate aminotransferase-like (Major domain)"/>
    <property type="match status" value="1"/>
</dbReference>
<dbReference type="HAMAP" id="MF_02084">
    <property type="entry name" value="LysJ_aminotrans_3"/>
    <property type="match status" value="1"/>
</dbReference>
<dbReference type="InterPro" id="IPR004636">
    <property type="entry name" value="AcOrn/SuccOrn_fam"/>
</dbReference>
<dbReference type="InterPro" id="IPR005814">
    <property type="entry name" value="Aminotrans_3"/>
</dbReference>
<dbReference type="InterPro" id="IPR049704">
    <property type="entry name" value="Aminotrans_3_PPA_site"/>
</dbReference>
<dbReference type="InterPro" id="IPR050103">
    <property type="entry name" value="Class-III_PLP-dep_AT"/>
</dbReference>
<dbReference type="InterPro" id="IPR037537">
    <property type="entry name" value="LysJ"/>
</dbReference>
<dbReference type="InterPro" id="IPR015424">
    <property type="entry name" value="PyrdxlP-dep_Trfase"/>
</dbReference>
<dbReference type="InterPro" id="IPR015421">
    <property type="entry name" value="PyrdxlP-dep_Trfase_major"/>
</dbReference>
<dbReference type="InterPro" id="IPR015422">
    <property type="entry name" value="PyrdxlP-dep_Trfase_small"/>
</dbReference>
<dbReference type="NCBIfam" id="TIGR00707">
    <property type="entry name" value="argD"/>
    <property type="match status" value="1"/>
</dbReference>
<dbReference type="NCBIfam" id="NF003087">
    <property type="entry name" value="PRK04013.1"/>
    <property type="match status" value="1"/>
</dbReference>
<dbReference type="PANTHER" id="PTHR11986:SF79">
    <property type="entry name" value="ACETYLORNITHINE AMINOTRANSFERASE, MITOCHONDRIAL"/>
    <property type="match status" value="1"/>
</dbReference>
<dbReference type="PANTHER" id="PTHR11986">
    <property type="entry name" value="AMINOTRANSFERASE CLASS III"/>
    <property type="match status" value="1"/>
</dbReference>
<dbReference type="Pfam" id="PF00202">
    <property type="entry name" value="Aminotran_3"/>
    <property type="match status" value="1"/>
</dbReference>
<dbReference type="PIRSF" id="PIRSF000521">
    <property type="entry name" value="Transaminase_4ab_Lys_Orn"/>
    <property type="match status" value="1"/>
</dbReference>
<dbReference type="SUPFAM" id="SSF53383">
    <property type="entry name" value="PLP-dependent transferases"/>
    <property type="match status" value="1"/>
</dbReference>
<dbReference type="PROSITE" id="PS00600">
    <property type="entry name" value="AA_TRANSFER_CLASS_3"/>
    <property type="match status" value="1"/>
</dbReference>